<reference key="1">
    <citation type="submission" date="2007-02" db="EMBL/GenBank/DDBJ databases">
        <title>Complete sequence of chromosome of Shewanella baltica OS155.</title>
        <authorList>
            <consortium name="US DOE Joint Genome Institute"/>
            <person name="Copeland A."/>
            <person name="Lucas S."/>
            <person name="Lapidus A."/>
            <person name="Barry K."/>
            <person name="Detter J.C."/>
            <person name="Glavina del Rio T."/>
            <person name="Hammon N."/>
            <person name="Israni S."/>
            <person name="Dalin E."/>
            <person name="Tice H."/>
            <person name="Pitluck S."/>
            <person name="Sims D.R."/>
            <person name="Brettin T."/>
            <person name="Bruce D."/>
            <person name="Han C."/>
            <person name="Tapia R."/>
            <person name="Brainard J."/>
            <person name="Schmutz J."/>
            <person name="Larimer F."/>
            <person name="Land M."/>
            <person name="Hauser L."/>
            <person name="Kyrpides N."/>
            <person name="Mikhailova N."/>
            <person name="Brettar I."/>
            <person name="Klappenbach J."/>
            <person name="Konstantinidis K."/>
            <person name="Rodrigues J."/>
            <person name="Tiedje J."/>
            <person name="Richardson P."/>
        </authorList>
    </citation>
    <scope>NUCLEOTIDE SEQUENCE [LARGE SCALE GENOMIC DNA]</scope>
    <source>
        <strain>OS155 / ATCC BAA-1091</strain>
    </source>
</reference>
<dbReference type="EC" id="4.1.2.4" evidence="1"/>
<dbReference type="EMBL" id="CP000563">
    <property type="protein sequence ID" value="ABN62707.1"/>
    <property type="molecule type" value="Genomic_DNA"/>
</dbReference>
<dbReference type="RefSeq" id="WP_011847507.1">
    <property type="nucleotide sequence ID" value="NC_009052.1"/>
</dbReference>
<dbReference type="SMR" id="A3D7J4"/>
<dbReference type="STRING" id="325240.Sbal_3227"/>
<dbReference type="KEGG" id="sbl:Sbal_3227"/>
<dbReference type="HOGENOM" id="CLU_053595_3_1_6"/>
<dbReference type="OrthoDB" id="6579831at2"/>
<dbReference type="UniPathway" id="UPA00002">
    <property type="reaction ID" value="UER00468"/>
</dbReference>
<dbReference type="Proteomes" id="UP000001557">
    <property type="component" value="Chromosome"/>
</dbReference>
<dbReference type="GO" id="GO:0005737">
    <property type="term" value="C:cytoplasm"/>
    <property type="evidence" value="ECO:0007669"/>
    <property type="project" value="UniProtKB-SubCell"/>
</dbReference>
<dbReference type="GO" id="GO:0004139">
    <property type="term" value="F:deoxyribose-phosphate aldolase activity"/>
    <property type="evidence" value="ECO:0007669"/>
    <property type="project" value="UniProtKB-UniRule"/>
</dbReference>
<dbReference type="GO" id="GO:0006018">
    <property type="term" value="P:2-deoxyribose 1-phosphate catabolic process"/>
    <property type="evidence" value="ECO:0007669"/>
    <property type="project" value="UniProtKB-UniRule"/>
</dbReference>
<dbReference type="GO" id="GO:0016052">
    <property type="term" value="P:carbohydrate catabolic process"/>
    <property type="evidence" value="ECO:0007669"/>
    <property type="project" value="TreeGrafter"/>
</dbReference>
<dbReference type="GO" id="GO:0009264">
    <property type="term" value="P:deoxyribonucleotide catabolic process"/>
    <property type="evidence" value="ECO:0007669"/>
    <property type="project" value="InterPro"/>
</dbReference>
<dbReference type="CDD" id="cd00959">
    <property type="entry name" value="DeoC"/>
    <property type="match status" value="1"/>
</dbReference>
<dbReference type="Gene3D" id="3.20.20.70">
    <property type="entry name" value="Aldolase class I"/>
    <property type="match status" value="1"/>
</dbReference>
<dbReference type="HAMAP" id="MF_00592">
    <property type="entry name" value="DeoC_type2"/>
    <property type="match status" value="1"/>
</dbReference>
<dbReference type="InterPro" id="IPR013785">
    <property type="entry name" value="Aldolase_TIM"/>
</dbReference>
<dbReference type="InterPro" id="IPR011343">
    <property type="entry name" value="DeoC"/>
</dbReference>
<dbReference type="InterPro" id="IPR002915">
    <property type="entry name" value="DeoC/FbaB/LacD_aldolase"/>
</dbReference>
<dbReference type="InterPro" id="IPR023649">
    <property type="entry name" value="DeoC_typeII"/>
</dbReference>
<dbReference type="NCBIfam" id="TIGR00126">
    <property type="entry name" value="deoC"/>
    <property type="match status" value="1"/>
</dbReference>
<dbReference type="PANTHER" id="PTHR10889">
    <property type="entry name" value="DEOXYRIBOSE-PHOSPHATE ALDOLASE"/>
    <property type="match status" value="1"/>
</dbReference>
<dbReference type="PANTHER" id="PTHR10889:SF3">
    <property type="entry name" value="DEOXYRIBOSE-PHOSPHATE ALDOLASE"/>
    <property type="match status" value="1"/>
</dbReference>
<dbReference type="Pfam" id="PF01791">
    <property type="entry name" value="DeoC"/>
    <property type="match status" value="1"/>
</dbReference>
<dbReference type="PIRSF" id="PIRSF001357">
    <property type="entry name" value="DeoC"/>
    <property type="match status" value="1"/>
</dbReference>
<dbReference type="SMART" id="SM01133">
    <property type="entry name" value="DeoC"/>
    <property type="match status" value="1"/>
</dbReference>
<dbReference type="SUPFAM" id="SSF51569">
    <property type="entry name" value="Aldolase"/>
    <property type="match status" value="1"/>
</dbReference>
<proteinExistence type="inferred from homology"/>
<organism>
    <name type="scientific">Shewanella baltica (strain OS155 / ATCC BAA-1091)</name>
    <dbReference type="NCBI Taxonomy" id="325240"/>
    <lineage>
        <taxon>Bacteria</taxon>
        <taxon>Pseudomonadati</taxon>
        <taxon>Pseudomonadota</taxon>
        <taxon>Gammaproteobacteria</taxon>
        <taxon>Alteromonadales</taxon>
        <taxon>Shewanellaceae</taxon>
        <taxon>Shewanella</taxon>
    </lineage>
</organism>
<comment type="function">
    <text evidence="1">Catalyzes a reversible aldol reaction between acetaldehyde and D-glyceraldehyde 3-phosphate to generate 2-deoxy-D-ribose 5-phosphate.</text>
</comment>
<comment type="catalytic activity">
    <reaction evidence="1">
        <text>2-deoxy-D-ribose 5-phosphate = D-glyceraldehyde 3-phosphate + acetaldehyde</text>
        <dbReference type="Rhea" id="RHEA:12821"/>
        <dbReference type="ChEBI" id="CHEBI:15343"/>
        <dbReference type="ChEBI" id="CHEBI:59776"/>
        <dbReference type="ChEBI" id="CHEBI:62877"/>
        <dbReference type="EC" id="4.1.2.4"/>
    </reaction>
</comment>
<comment type="pathway">
    <text evidence="1">Carbohydrate degradation; 2-deoxy-D-ribose 1-phosphate degradation; D-glyceraldehyde 3-phosphate and acetaldehyde from 2-deoxy-alpha-D-ribose 1-phosphate: step 2/2.</text>
</comment>
<comment type="subcellular location">
    <subcellularLocation>
        <location evidence="1">Cytoplasm</location>
    </subcellularLocation>
</comment>
<comment type="similarity">
    <text evidence="1">Belongs to the DeoC/FbaB aldolase family. DeoC type 2 subfamily.</text>
</comment>
<evidence type="ECO:0000255" key="1">
    <source>
        <dbReference type="HAMAP-Rule" id="MF_00592"/>
    </source>
</evidence>
<keyword id="KW-0963">Cytoplasm</keyword>
<keyword id="KW-0456">Lyase</keyword>
<keyword id="KW-1185">Reference proteome</keyword>
<keyword id="KW-0704">Schiff base</keyword>
<feature type="chain" id="PRO_1000072603" description="Deoxyribose-phosphate aldolase">
    <location>
        <begin position="1"/>
        <end position="256"/>
    </location>
</feature>
<feature type="active site" description="Proton donor/acceptor" evidence="1">
    <location>
        <position position="102"/>
    </location>
</feature>
<feature type="active site" description="Schiff-base intermediate with acetaldehyde" evidence="1">
    <location>
        <position position="165"/>
    </location>
</feature>
<feature type="active site" description="Proton donor/acceptor" evidence="1">
    <location>
        <position position="197"/>
    </location>
</feature>
<accession>A3D7J4</accession>
<name>DEOC_SHEB5</name>
<gene>
    <name evidence="1" type="primary">deoC</name>
    <name type="ordered locus">Sbal_3227</name>
</gene>
<sequence>MTDLKKAAQRAIELMDLTTLNDDDTDQKVIYLCHKAKTAAGNTAAICIYPRFIPIARKTLDEIGAEDIQIATVTNFPHGNDDIAIAVLETRAAVAYGADEVDVVFPYRALMEGNETIGFELVKACKEACGEVLLKVIIESGVLADPALIRRASELSIDAGADFIKTSTGKVPVNATLEAAEIMLTVISEKNTQVGFKPAGGVRDAAQAAEFLGVAERILGADWVSPRTFRFGASSLLNSLLHTLELADAPKPTQGY</sequence>
<protein>
    <recommendedName>
        <fullName evidence="1">Deoxyribose-phosphate aldolase</fullName>
        <shortName evidence="1">DERA</shortName>
        <ecNumber evidence="1">4.1.2.4</ecNumber>
    </recommendedName>
    <alternativeName>
        <fullName evidence="1">2-deoxy-D-ribose 5-phosphate aldolase</fullName>
    </alternativeName>
    <alternativeName>
        <fullName evidence="1">Phosphodeoxyriboaldolase</fullName>
        <shortName evidence="1">Deoxyriboaldolase</shortName>
    </alternativeName>
</protein>